<comment type="function">
    <text evidence="4 5 6">Class B beta-lactamase which confers resistance to the beta-lactam antibiotics, including penicillins, cephalosporins and carbapenems (PubMed:32229489). Acts via hydrolysis of the beta-lactam ring (PubMed:15561840, PubMed:28971872). Has penicillin-, cephalosporin- and carbapenem-hydrolyzing activities (PubMed:15561840, PubMed:28971872).</text>
</comment>
<comment type="catalytic activity">
    <reaction evidence="4 5">
        <text>a beta-lactam + H2O = a substituted beta-amino acid</text>
        <dbReference type="Rhea" id="RHEA:20401"/>
        <dbReference type="ChEBI" id="CHEBI:15377"/>
        <dbReference type="ChEBI" id="CHEBI:35627"/>
        <dbReference type="ChEBI" id="CHEBI:140347"/>
        <dbReference type="EC" id="3.5.2.6"/>
    </reaction>
</comment>
<comment type="cofactor">
    <cofactor evidence="10">
        <name>Zn(2+)</name>
        <dbReference type="ChEBI" id="CHEBI:29105"/>
    </cofactor>
</comment>
<comment type="activity regulation">
    <text evidence="5">Weakly inhibited by beta-lactamase-blocking agent sulbactam.</text>
</comment>
<comment type="biophysicochemical properties">
    <kinetics>
        <KM evidence="4">841 uM for penicillin (at pH 7.0 and 25 degrees Celsius)</KM>
        <KM evidence="4">917 uM for ampicillin (at pH 7.0 and 25 degrees Celsius)</KM>
        <KM evidence="4">75 uM for carbenicillin (at pH 7.0 and 25 degrees Celsius)</KM>
        <KM evidence="4">123 uM for azlocillin (at pH 7.0 and 25 degrees Celsius)</KM>
        <KM evidence="4">1117 uM for ticarcillin (at pH 7.0 and 25 degrees Celsius)</KM>
        <KM evidence="4">3500 uM for piperacillin (at pH 7.0 and 25 degrees Celsius)</KM>
        <KM evidence="4">53 uM for cefalotin (at pH 7.0 and 25 degrees Celsius)</KM>
        <KM evidence="4">17 uM for nitrocefin (at pH 7.0 and 25 degrees Celsius)</KM>
        <KM evidence="4">42 uM for cefuroxime (at pH 7.0 and 25 degrees Celsius)</KM>
        <KM evidence="4">131 uM for cefoxitin (at pH 7.0 and 25 degrees Celsius)</KM>
        <KM evidence="4">794 uM for ceftazidime (at pH 7.0 and 25 degrees Celsius)</KM>
        <KM evidence="4">247 uM for cefotaxime (at pH 7.0 and 25 degrees Celsius)</KM>
        <KM evidence="4">145 uM for cefepime (at pH 7.0 and 25 degrees Celsius)</KM>
        <KM evidence="4">1.5 uM for imipenem (at pH 7.0 and 25 degrees Celsius)</KM>
        <KM evidence="4">48 uM for meropenem (at pH 7.0 and 25 degrees Celsius)</KM>
        <KM evidence="4">1000 uM for aztreonam (at pH 7.0 and 25 degrees Celsius)</KM>
        <KM evidence="4">337 uM for tazobactam (at pH 7.0 and 25 degrees Celsius)</KM>
        <KM evidence="5">960 uM for sulbactam (at pH 7.0)</KM>
        <text evidence="4 5">kcat is 29 sec(-1) with penicillin as substrate (at pH 7.0 and 25 degrees Celsius) (PubMed:15561840). kcat is 37 sec(-1) with ampicillin as substrate (at pH 7.0 and 25 degrees Celsius) (PubMed:15561840). kcat is 167 sec(-1) with carbenicillin as substrate (at pH 7.0 and 25 degrees Celsius) (PubMed:15561840). kcat is 1525 sec(-1) with azlocillin as substrate (at pH 7.0 and 25 degrees Celsius) (PubMed:15561840). kcat is 452 sec(-1) with ticarcillin as substrate (at pH 7.0 and 25 degrees Celsius) (PubMed:15561840). kcat is 1860 sec(-1) with piperacillin as substrate (at pH 7.0 and 25 degrees Celsius) (PubMed:15561840). kcat is 281 sec(-1) with cefalotin as substrate (at pH 7.0 and 25 degrees Celsius) (PubMed:15561840). kcat is 95 sec(-1) with nitrocefin as substrate (at pH 7.0 and 25 degrees Celsius) (PubMed:15561840). kcat is 324 sec(-1) with cefuroxime as substrate (at pH 7.0 and 25 degrees Celsius) (PubMed:15561840). kcat is 26 sec(-1) with cefoxitin as substrate (at pH 7.0 and 25 degrees Celsius) (PubMed:15561840). kcat is 60 sec(-1) with ceftazidime as substrate (at pH 7.0 and 25 degrees Celsius) (PubMed:15561840). kcat is 169 sec(-1) with cefotaxime as substrate (at pH 7.0 and 25 degrees Celsius) (PubMed:15561840). kcat is 549 sec(-1) with cefepime as substrate (at pH 7.0 and 25 degrees Celsius) (PubMed:15561840). kcat is 2.0 sec(-1) with imipenem as substrate (at pH 7.0 and 25 degrees Celsius) (PubMed:15561840). kcat is 13 sec(-1) with meropenem as substrate (at pH 7.0 and 25 degrees Celsius) (PubMed:15561840). kcat is 0.01 sec(-1) with aztreonam as substrate (at pH 7.0 and 25 degrees Celsius) (PubMed:15561840). kcat is 5.3 sec(-1) with tazobactam as substrate (at pH 7.0 and 25 degrees Celsius) (PubMed:15561840). kcat is 13 sec(-1) with sulbactam as substrate (at pH 7.0) (PubMed:28971872).</text>
    </kinetics>
</comment>
<comment type="subunit">
    <text evidence="1">Monomer.</text>
</comment>
<comment type="subcellular location">
    <subcellularLocation>
        <location evidence="1">Periplasm</location>
    </subcellularLocation>
</comment>
<comment type="miscellaneous">
    <text evidence="3">The class B beta-lactamase family has a specific amino-acid numbering system known as BBL, for standard numbering of class B beta-lactamases. A multiple sequence alignment was used to derive a consensus sequence and then the consensus was numbered taking into account insertions and deletions. This allows use of identical numbers, e.g. for active site residues, despite differences in protein length. UniProt always uses natural numbering of residues, hence there appear to be differences in numbering between this entry and some papers.</text>
</comment>
<comment type="similarity">
    <text evidence="9">Belongs to the metallo-beta-lactamase superfamily. Class-B beta-lactamase family.</text>
</comment>
<geneLocation type="plasmid" evidence="12">
    <name>pAMBL1</name>
</geneLocation>
<geneLocation type="plasmid" evidence="11">
    <name>pAMBL2</name>
</geneLocation>
<reference evidence="12" key="1">
    <citation type="submission" date="2015-03" db="EMBL/GenBank/DDBJ databases">
        <title>Complete sequence of plasmid pAMBL1 carrying blaVIM-1 from Pseudomonas aeruginosa.</title>
        <authorList>
            <person name="San Millan A."/>
        </authorList>
    </citation>
    <scope>NUCLEOTIDE SEQUENCE [GENOMIC DNA]</scope>
    <source>
        <strain evidence="12">ATCC 15692 / DSM 22644 / CIP 104116 / JCM 14847 / LMG 12228 / 1C / PRS 101 / PAO1</strain>
        <plasmid evidence="12">pAMBL1</plasmid>
    </source>
</reference>
<reference evidence="11" key="2">
    <citation type="submission" date="2015-03" db="EMBL/GenBank/DDBJ databases">
        <title>Complete sequence of plasmid pAMBL2 carrying blaVIM-1 from Pseudomonas aeruginosa.</title>
        <authorList>
            <person name="San Millan A."/>
        </authorList>
    </citation>
    <scope>NUCLEOTIDE SEQUENCE [GENOMIC DNA]</scope>
    <source>
        <strain evidence="11">ATCC 15692 / DSM 22644 / CIP 104116 / JCM 14847 / LMG 12228 / 1C / PRS 101 / PAO1</strain>
        <plasmid evidence="11">pAMBL2</plasmid>
    </source>
</reference>
<reference evidence="9" key="3">
    <citation type="journal article" date="2001" name="Antimicrob. Agents Chemother.">
        <title>Standard numbering scheme for class B beta-lactamases.</title>
        <authorList>
            <consortium name="Metallo-beta-lactamases Working Group"/>
            <person name="Galleni M."/>
            <person name="Lamotte-Brasseur J."/>
            <person name="Rossolini G.M."/>
            <person name="Spencer J."/>
            <person name="Dideberg O."/>
            <person name="Frere J.M."/>
        </authorList>
    </citation>
    <scope>AMINO ACID NUMBERING SCHEME</scope>
</reference>
<reference evidence="9" key="4">
    <citation type="journal article" date="2004" name="Antimicrob. Agents Chemother.">
        <title>Molecular characterization of a beta-lactamase gene, blaGIM-1, encoding a new subclass of metallo-beta-lactamase.</title>
        <authorList>
            <person name="Castanheira M."/>
            <person name="Toleman M.A."/>
            <person name="Jones R.N."/>
            <person name="Schmidt F.J."/>
            <person name="Walsh T.R."/>
        </authorList>
    </citation>
    <scope>FUNCTION</scope>
    <scope>CATALYTIC ACTIVITY</scope>
    <scope>COFACTOR</scope>
    <scope>BIOPHYSICOCHEMICAL PROPERTIES</scope>
</reference>
<reference evidence="9" key="5">
    <citation type="journal article" date="2017" name="Antimicrob. Agents Chemother.">
        <title>Kinetics of Sulbactam Hydrolysis by beta-Lactamases, and Kinetics of beta-Lactamase Inhibition by Sulbactam.</title>
        <authorList>
            <person name="Shapiro A.B."/>
        </authorList>
    </citation>
    <scope>FUNCTION</scope>
    <scope>CATALYTIC ACTIVITY</scope>
    <scope>ACTIVITY REGULATION</scope>
    <scope>BIOPHYSICOCHEMICAL PROPERTIES</scope>
</reference>
<reference evidence="9" key="6">
    <citation type="journal article" date="2020" name="Antimicrob. Agents Chemother.">
        <title>Spectrum of Beta-Lactamase Inhibition by the Cyclic Boronate QPX7728, an Ultrabroad-Spectrum Beta-Lactamase Inhibitor of Serine and Metallo-Beta-Lactamases: Enhancement of Activity of Multiple Antibiotics against Isogenic Strains Expressing Single Beta-Lactamases.</title>
        <authorList>
            <person name="Lomovskaya O."/>
            <person name="Tsivkovski R."/>
            <person name="Nelson K."/>
            <person name="Rubio-Aparicio D."/>
            <person name="Sun D."/>
            <person name="Totrov M."/>
            <person name="Dudley M.N."/>
        </authorList>
    </citation>
    <scope>FUNCTION</scope>
    <source>
        <strain evidence="8">PAM1154</strain>
    </source>
</reference>
<reference evidence="13 14" key="7">
    <citation type="journal article" date="2024" name="J. Med. Chem.">
        <title>Structure Guided Discovery of Novel Pan Metallo-beta-Lactamase Inhibitors with Improved Gram-Negative Bacterial Cell Penetration.</title>
        <authorList>
            <person name="Dong S."/>
            <person name="Zhao Z."/>
            <person name="Tang H."/>
            <person name="Li G."/>
            <person name="Pan J."/>
            <person name="Gu X."/>
            <person name="Jiang J."/>
            <person name="Xiao L."/>
            <person name="Scapin G."/>
            <person name="Hunter D.N."/>
            <person name="Yang D."/>
            <person name="Huang Y."/>
            <person name="Bennett F."/>
            <person name="Yang S.W."/>
            <person name="Mandal M."/>
            <person name="Tang H."/>
            <person name="Su J."/>
            <person name="Tudge C."/>
            <person name="deJesus R.K."/>
            <person name="Ding F.X."/>
            <person name="Lombardo M."/>
            <person name="Hicks J.D."/>
            <person name="Fischmann T."/>
            <person name="Mirza A."/>
            <person name="Dayananth P."/>
            <person name="Painter R.E."/>
            <person name="Villafania A."/>
            <person name="Garlisi C.G."/>
            <person name="Zhang R."/>
            <person name="Mayhood T.W."/>
            <person name="Si Q."/>
            <person name="Li N."/>
            <person name="Amin R.P."/>
            <person name="Bhatt B."/>
            <person name="Chen F."/>
            <person name="Regan C.P."/>
            <person name="Regan H."/>
            <person name="Lin X."/>
            <person name="Wu J."/>
            <person name="Leithead A."/>
            <person name="Pollack S.R."/>
            <person name="Scott J.D."/>
            <person name="Nargund R.P."/>
            <person name="Therien A.G."/>
            <person name="Black T."/>
            <person name="Young K."/>
            <person name="Pasternak A."/>
        </authorList>
    </citation>
    <scope>X-RAY CRYSTALLOGRAPHY (1.01 ANGSTROMS) OF 27-266 IN COMPLEXES WITH ZN(2+) AND SUBSTRATE ANALOG INHIBITORS</scope>
</reference>
<accession>A0A0F7KYQ8</accession>
<gene>
    <name evidence="7" type="primary">VIM-1</name>
    <name evidence="12" type="synonym">blaVIM-1</name>
</gene>
<name>BLBV1_PSEAE</name>
<evidence type="ECO:0000250" key="1">
    <source>
        <dbReference type="UniProtKB" id="P25910"/>
    </source>
</evidence>
<evidence type="ECO:0000255" key="2"/>
<evidence type="ECO:0000269" key="3">
    <source>
    </source>
</evidence>
<evidence type="ECO:0000269" key="4">
    <source>
    </source>
</evidence>
<evidence type="ECO:0000269" key="5">
    <source>
    </source>
</evidence>
<evidence type="ECO:0000269" key="6">
    <source>
    </source>
</evidence>
<evidence type="ECO:0000303" key="7">
    <source>
    </source>
</evidence>
<evidence type="ECO:0000303" key="8">
    <source>
    </source>
</evidence>
<evidence type="ECO:0000305" key="9"/>
<evidence type="ECO:0000305" key="10">
    <source>
    </source>
</evidence>
<evidence type="ECO:0000312" key="11">
    <source>
        <dbReference type="EMBL" id="AKH45382.1"/>
    </source>
</evidence>
<evidence type="ECO:0000312" key="12">
    <source>
        <dbReference type="EMBL" id="AKH45414.1"/>
    </source>
</evidence>
<evidence type="ECO:0007744" key="13">
    <source>
        <dbReference type="PDB" id="7UYA"/>
    </source>
</evidence>
<evidence type="ECO:0007744" key="14">
    <source>
        <dbReference type="PDB" id="7UYB"/>
    </source>
</evidence>
<evidence type="ECO:0007744" key="15">
    <source>
        <dbReference type="PDB" id="7UYC"/>
    </source>
</evidence>
<evidence type="ECO:0007829" key="16">
    <source>
        <dbReference type="PDB" id="7UYA"/>
    </source>
</evidence>
<feature type="signal peptide" evidence="2">
    <location>
        <begin position="1"/>
        <end position="20"/>
    </location>
</feature>
<feature type="chain" id="PRO_5010030570" description="Metallo-beta-lactamase VIM-1" evidence="2">
    <location>
        <begin position="21"/>
        <end position="266"/>
    </location>
</feature>
<feature type="binding site" evidence="13 14">
    <location>
        <position position="114"/>
    </location>
    <ligand>
        <name>Zn(2+)</name>
        <dbReference type="ChEBI" id="CHEBI:29105"/>
        <label>1</label>
    </ligand>
</feature>
<feature type="binding site" evidence="13 14">
    <location>
        <position position="116"/>
    </location>
    <ligand>
        <name>Zn(2+)</name>
        <dbReference type="ChEBI" id="CHEBI:29105"/>
        <label>1</label>
    </ligand>
</feature>
<feature type="binding site" evidence="13 15">
    <location>
        <position position="118"/>
    </location>
    <ligand>
        <name>Zn(2+)</name>
        <dbReference type="ChEBI" id="CHEBI:29105"/>
        <label>1</label>
    </ligand>
</feature>
<feature type="binding site" evidence="13 14">
    <location>
        <position position="118"/>
    </location>
    <ligand>
        <name>Zn(2+)</name>
        <dbReference type="ChEBI" id="CHEBI:29105"/>
        <label>2</label>
    </ligand>
</feature>
<feature type="binding site" evidence="13 14">
    <location>
        <position position="179"/>
    </location>
    <ligand>
        <name>Zn(2+)</name>
        <dbReference type="ChEBI" id="CHEBI:29105"/>
        <label>1</label>
    </ligand>
</feature>
<feature type="binding site" evidence="13 14">
    <location>
        <position position="198"/>
    </location>
    <ligand>
        <name>Zn(2+)</name>
        <dbReference type="ChEBI" id="CHEBI:29105"/>
        <label>2</label>
    </ligand>
</feature>
<feature type="binding site" evidence="13 14">
    <location>
        <position position="240"/>
    </location>
    <ligand>
        <name>Zn(2+)</name>
        <dbReference type="ChEBI" id="CHEBI:29105"/>
        <label>2</label>
    </ligand>
</feature>
<feature type="helix" evidence="16">
    <location>
        <begin position="36"/>
        <end position="38"/>
    </location>
</feature>
<feature type="strand" evidence="16">
    <location>
        <begin position="45"/>
        <end position="50"/>
    </location>
</feature>
<feature type="strand" evidence="16">
    <location>
        <begin position="53"/>
        <end position="62"/>
    </location>
</feature>
<feature type="strand" evidence="16">
    <location>
        <begin position="65"/>
        <end position="76"/>
    </location>
</feature>
<feature type="strand" evidence="16">
    <location>
        <begin position="79"/>
        <end position="84"/>
    </location>
</feature>
<feature type="helix" evidence="16">
    <location>
        <begin position="89"/>
        <end position="102"/>
    </location>
</feature>
<feature type="strand" evidence="16">
    <location>
        <begin position="107"/>
        <end position="111"/>
    </location>
</feature>
<feature type="strand" evidence="16">
    <location>
        <begin position="113"/>
        <end position="116"/>
    </location>
</feature>
<feature type="helix" evidence="16">
    <location>
        <begin position="117"/>
        <end position="120"/>
    </location>
</feature>
<feature type="helix" evidence="16">
    <location>
        <begin position="123"/>
        <end position="128"/>
    </location>
</feature>
<feature type="strand" evidence="16">
    <location>
        <begin position="132"/>
        <end position="135"/>
    </location>
</feature>
<feature type="helix" evidence="16">
    <location>
        <begin position="137"/>
        <end position="146"/>
    </location>
</feature>
<feature type="strand" evidence="16">
    <location>
        <begin position="152"/>
        <end position="154"/>
    </location>
</feature>
<feature type="strand" evidence="16">
    <location>
        <begin position="164"/>
        <end position="167"/>
    </location>
</feature>
<feature type="strand" evidence="16">
    <location>
        <begin position="170"/>
        <end position="173"/>
    </location>
</feature>
<feature type="strand" evidence="16">
    <location>
        <begin position="177"/>
        <end position="180"/>
    </location>
</feature>
<feature type="strand" evidence="16">
    <location>
        <begin position="185"/>
        <end position="188"/>
    </location>
</feature>
<feature type="turn" evidence="16">
    <location>
        <begin position="189"/>
        <end position="192"/>
    </location>
</feature>
<feature type="strand" evidence="16">
    <location>
        <begin position="193"/>
        <end position="197"/>
    </location>
</feature>
<feature type="turn" evidence="16">
    <location>
        <begin position="216"/>
        <end position="218"/>
    </location>
</feature>
<feature type="helix" evidence="16">
    <location>
        <begin position="219"/>
        <end position="229"/>
    </location>
</feature>
<feature type="strand" evidence="16">
    <location>
        <begin position="234"/>
        <end position="241"/>
    </location>
</feature>
<feature type="helix" evidence="16">
    <location>
        <begin position="247"/>
        <end position="260"/>
    </location>
</feature>
<keyword id="KW-0002">3D-structure</keyword>
<keyword id="KW-0046">Antibiotic resistance</keyword>
<keyword id="KW-0378">Hydrolase</keyword>
<keyword id="KW-0479">Metal-binding</keyword>
<keyword id="KW-0574">Periplasm</keyword>
<keyword id="KW-0614">Plasmid</keyword>
<keyword id="KW-0732">Signal</keyword>
<keyword id="KW-0862">Zinc</keyword>
<proteinExistence type="evidence at protein level"/>
<organism evidence="12">
    <name type="scientific">Pseudomonas aeruginosa (strain ATCC 15692 / DSM 22644 / CIP 104116 / JCM 14847 / LMG 12228 / 1C / PRS 101 / PAO1)</name>
    <dbReference type="NCBI Taxonomy" id="208964"/>
    <lineage>
        <taxon>Bacteria</taxon>
        <taxon>Pseudomonadati</taxon>
        <taxon>Pseudomonadota</taxon>
        <taxon>Gammaproteobacteria</taxon>
        <taxon>Pseudomonadales</taxon>
        <taxon>Pseudomonadaceae</taxon>
        <taxon>Pseudomonas</taxon>
    </lineage>
</organism>
<sequence length="266" mass="28024">MLKVISSLLVYMTASVMAVASPLAHSGEPSGEYPTVNEIPVGEVRLYQIADGVWSHIATQSFDGAVYPSNGLIVRDGDELLLIDTAWGAKNTAALLAEIEKQIGLPVTRAVSTHFHDDRVGGVDVLRAAGVATYASPSTRRLAEAEGNEIPTHSLEGLSSSGDAVRFGPVELFYPGAAHSTDNLVVYVPSANVLYGGCAVHELSSTSAGNVADADLAEWPTSVERIQKHYPEAEVVIPGHGLPGGLDLLQHTANVVKAHKNRSVAE</sequence>
<dbReference type="EC" id="3.5.2.6" evidence="4 5"/>
<dbReference type="EMBL" id="KP873171">
    <property type="protein sequence ID" value="AKH45382.1"/>
    <property type="molecule type" value="Genomic_DNA"/>
</dbReference>
<dbReference type="EMBL" id="KP873171">
    <property type="protein sequence ID" value="AKH45383.1"/>
    <property type="molecule type" value="Genomic_DNA"/>
</dbReference>
<dbReference type="EMBL" id="KP873171">
    <property type="protein sequence ID" value="AKH45385.1"/>
    <property type="molecule type" value="Genomic_DNA"/>
</dbReference>
<dbReference type="EMBL" id="KP873172">
    <property type="protein sequence ID" value="AKH45414.1"/>
    <property type="molecule type" value="Genomic_DNA"/>
</dbReference>
<dbReference type="PDB" id="7UYA">
    <property type="method" value="X-ray"/>
    <property type="resolution" value="1.01 A"/>
    <property type="chains" value="A=27-266"/>
</dbReference>
<dbReference type="PDB" id="7UYB">
    <property type="method" value="X-ray"/>
    <property type="resolution" value="1.11 A"/>
    <property type="chains" value="A=27-266"/>
</dbReference>
<dbReference type="PDB" id="7UYC">
    <property type="method" value="X-ray"/>
    <property type="resolution" value="1.02 A"/>
    <property type="chains" value="A=27-266"/>
</dbReference>
<dbReference type="PDB" id="8Y4I">
    <property type="method" value="X-ray"/>
    <property type="resolution" value="1.94 A"/>
    <property type="chains" value="A/B/C/D/E/F/G/H=33-261"/>
</dbReference>
<dbReference type="PDB" id="8Y4K">
    <property type="method" value="X-ray"/>
    <property type="resolution" value="2.50 A"/>
    <property type="chains" value="A/B=33-261"/>
</dbReference>
<dbReference type="PDB" id="8Y4M">
    <property type="method" value="X-ray"/>
    <property type="resolution" value="2.17 A"/>
    <property type="chains" value="A/B/C=33-261"/>
</dbReference>
<dbReference type="PDB" id="9C5P">
    <property type="method" value="X-ray"/>
    <property type="resolution" value="1.15 A"/>
    <property type="chains" value="A=27-266"/>
</dbReference>
<dbReference type="PDBsum" id="7UYA"/>
<dbReference type="PDBsum" id="7UYB"/>
<dbReference type="PDBsum" id="7UYC"/>
<dbReference type="PDBsum" id="8Y4I"/>
<dbReference type="PDBsum" id="8Y4K"/>
<dbReference type="PDBsum" id="8Y4M"/>
<dbReference type="PDBsum" id="9C5P"/>
<dbReference type="SMR" id="A0A0F7KYQ8"/>
<dbReference type="CARD" id="ARO:3002271">
    <property type="molecule name" value="VIM-1"/>
    <property type="mechanism identifier" value="ARO:0001004"/>
    <property type="mechanism name" value="antibiotic inactivation"/>
</dbReference>
<dbReference type="GO" id="GO:0042597">
    <property type="term" value="C:periplasmic space"/>
    <property type="evidence" value="ECO:0007669"/>
    <property type="project" value="UniProtKB-SubCell"/>
</dbReference>
<dbReference type="GO" id="GO:0016787">
    <property type="term" value="F:hydrolase activity"/>
    <property type="evidence" value="ECO:0007669"/>
    <property type="project" value="UniProtKB-KW"/>
</dbReference>
<dbReference type="GO" id="GO:0046872">
    <property type="term" value="F:metal ion binding"/>
    <property type="evidence" value="ECO:0007669"/>
    <property type="project" value="UniProtKB-KW"/>
</dbReference>
<dbReference type="GO" id="GO:0046677">
    <property type="term" value="P:response to antibiotic"/>
    <property type="evidence" value="ECO:0007669"/>
    <property type="project" value="UniProtKB-KW"/>
</dbReference>
<dbReference type="CDD" id="cd16303">
    <property type="entry name" value="VIM_type_MBL-B1"/>
    <property type="match status" value="1"/>
</dbReference>
<dbReference type="FunFam" id="3.60.15.10:FF:000020">
    <property type="entry name" value="Class B metallo-beta-lactamase"/>
    <property type="match status" value="1"/>
</dbReference>
<dbReference type="Gene3D" id="3.60.15.10">
    <property type="entry name" value="Ribonuclease Z/Hydroxyacylglutathione hydrolase-like"/>
    <property type="match status" value="1"/>
</dbReference>
<dbReference type="InterPro" id="IPR001279">
    <property type="entry name" value="Metallo-B-lactamas"/>
</dbReference>
<dbReference type="InterPro" id="IPR050855">
    <property type="entry name" value="NDM-1-like"/>
</dbReference>
<dbReference type="InterPro" id="IPR036866">
    <property type="entry name" value="RibonucZ/Hydroxyglut_hydro"/>
</dbReference>
<dbReference type="InterPro" id="IPR049721">
    <property type="entry name" value="VIM-type_MBL"/>
</dbReference>
<dbReference type="NCBIfam" id="NF012229">
    <property type="entry name" value="bla_class_B_core"/>
    <property type="match status" value="1"/>
</dbReference>
<dbReference type="NCBIfam" id="NF033088">
    <property type="entry name" value="bla_subclass_B1"/>
    <property type="match status" value="1"/>
</dbReference>
<dbReference type="NCBIfam" id="NF012100">
    <property type="entry name" value="blaVIM"/>
    <property type="match status" value="1"/>
</dbReference>
<dbReference type="PANTHER" id="PTHR42951:SF4">
    <property type="entry name" value="ACYL-COENZYME A THIOESTERASE MBLAC2"/>
    <property type="match status" value="1"/>
</dbReference>
<dbReference type="PANTHER" id="PTHR42951">
    <property type="entry name" value="METALLO-BETA-LACTAMASE DOMAIN-CONTAINING"/>
    <property type="match status" value="1"/>
</dbReference>
<dbReference type="Pfam" id="PF00753">
    <property type="entry name" value="Lactamase_B"/>
    <property type="match status" value="1"/>
</dbReference>
<dbReference type="SMART" id="SM00849">
    <property type="entry name" value="Lactamase_B"/>
    <property type="match status" value="1"/>
</dbReference>
<dbReference type="SUPFAM" id="SSF56281">
    <property type="entry name" value="Metallo-hydrolase/oxidoreductase"/>
    <property type="match status" value="1"/>
</dbReference>
<protein>
    <recommendedName>
        <fullName evidence="7">Metallo-beta-lactamase VIM-1</fullName>
        <ecNumber evidence="4 5">3.5.2.6</ecNumber>
    </recommendedName>
</protein>